<feature type="chain" id="PRO_0000214128" description="UDP-2,3-diacylglucosamine hydrolase">
    <location>
        <begin position="1"/>
        <end position="243"/>
    </location>
</feature>
<feature type="binding site" evidence="1">
    <location>
        <position position="8"/>
    </location>
    <ligand>
        <name>Mn(2+)</name>
        <dbReference type="ChEBI" id="CHEBI:29035"/>
        <label>1</label>
    </ligand>
</feature>
<feature type="binding site" evidence="1">
    <location>
        <position position="10"/>
    </location>
    <ligand>
        <name>Mn(2+)</name>
        <dbReference type="ChEBI" id="CHEBI:29035"/>
        <label>1</label>
    </ligand>
</feature>
<feature type="binding site" evidence="1">
    <location>
        <position position="41"/>
    </location>
    <ligand>
        <name>Mn(2+)</name>
        <dbReference type="ChEBI" id="CHEBI:29035"/>
        <label>1</label>
    </ligand>
</feature>
<feature type="binding site" evidence="1">
    <location>
        <position position="41"/>
    </location>
    <ligand>
        <name>Mn(2+)</name>
        <dbReference type="ChEBI" id="CHEBI:29035"/>
        <label>2</label>
    </ligand>
</feature>
<feature type="binding site" evidence="1">
    <location>
        <begin position="79"/>
        <end position="80"/>
    </location>
    <ligand>
        <name>substrate</name>
    </ligand>
</feature>
<feature type="binding site" evidence="1">
    <location>
        <position position="79"/>
    </location>
    <ligand>
        <name>Mn(2+)</name>
        <dbReference type="ChEBI" id="CHEBI:29035"/>
        <label>2</label>
    </ligand>
</feature>
<feature type="binding site" evidence="1">
    <location>
        <position position="114"/>
    </location>
    <ligand>
        <name>Mn(2+)</name>
        <dbReference type="ChEBI" id="CHEBI:29035"/>
        <label>2</label>
    </ligand>
</feature>
<feature type="binding site" evidence="1">
    <location>
        <position position="122"/>
    </location>
    <ligand>
        <name>substrate</name>
    </ligand>
</feature>
<feature type="binding site" evidence="1">
    <location>
        <position position="164"/>
    </location>
    <ligand>
        <name>substrate</name>
    </ligand>
</feature>
<feature type="binding site" evidence="1">
    <location>
        <position position="167"/>
    </location>
    <ligand>
        <name>substrate</name>
    </ligand>
</feature>
<feature type="binding site" evidence="1">
    <location>
        <position position="195"/>
    </location>
    <ligand>
        <name>Mn(2+)</name>
        <dbReference type="ChEBI" id="CHEBI:29035"/>
        <label>2</label>
    </ligand>
</feature>
<feature type="binding site" evidence="1">
    <location>
        <position position="195"/>
    </location>
    <ligand>
        <name>substrate</name>
    </ligand>
</feature>
<feature type="binding site" evidence="1">
    <location>
        <position position="197"/>
    </location>
    <ligand>
        <name>Mn(2+)</name>
        <dbReference type="ChEBI" id="CHEBI:29035"/>
        <label>1</label>
    </ligand>
</feature>
<protein>
    <recommendedName>
        <fullName evidence="1">UDP-2,3-diacylglucosamine hydrolase</fullName>
        <ecNumber evidence="1">3.6.1.54</ecNumber>
    </recommendedName>
    <alternativeName>
        <fullName evidence="1">UDP-2,3-diacylglucosamine diphosphatase</fullName>
    </alternativeName>
</protein>
<accession>Q7MLR7</accession>
<sequence>MTTLFISDLHLTPSRTDITECFVQFMRNEAVNAEALYVLGDLFEFWIGDEDCTPFAERIRNEFKALTTSGVPVYFIQGNRDFLLGQRFCRETGITLLDDVCTIDLYGEKVVILHGDTLCIDDLKYQEFRKTVHQPWLQWIFKRIPWFIKKRIVAKVQSGVRDDKQHKSLEIMDVNQQEVAQVMSQFCVKLMIHGHTHRPNIHHFEHDNLPLTRIVLGDWYSQGSVLKVTADGYSLEQRPFFTE</sequence>
<dbReference type="EC" id="3.6.1.54" evidence="1"/>
<dbReference type="EMBL" id="BA000037">
    <property type="protein sequence ID" value="BAC94124.1"/>
    <property type="molecule type" value="Genomic_DNA"/>
</dbReference>
<dbReference type="RefSeq" id="WP_011150027.1">
    <property type="nucleotide sequence ID" value="NC_005139.1"/>
</dbReference>
<dbReference type="SMR" id="Q7MLR7"/>
<dbReference type="STRING" id="672.VV93_v1c12730"/>
<dbReference type="KEGG" id="vvy:VV1360"/>
<dbReference type="PATRIC" id="fig|196600.6.peg.1349"/>
<dbReference type="eggNOG" id="COG2908">
    <property type="taxonomic scope" value="Bacteria"/>
</dbReference>
<dbReference type="HOGENOM" id="CLU_074586_0_0_6"/>
<dbReference type="UniPathway" id="UPA00359">
    <property type="reaction ID" value="UER00480"/>
</dbReference>
<dbReference type="Proteomes" id="UP000002675">
    <property type="component" value="Chromosome I"/>
</dbReference>
<dbReference type="GO" id="GO:0005737">
    <property type="term" value="C:cytoplasm"/>
    <property type="evidence" value="ECO:0007669"/>
    <property type="project" value="InterPro"/>
</dbReference>
<dbReference type="GO" id="GO:0019897">
    <property type="term" value="C:extrinsic component of plasma membrane"/>
    <property type="evidence" value="ECO:0007669"/>
    <property type="project" value="UniProtKB-UniRule"/>
</dbReference>
<dbReference type="GO" id="GO:0030145">
    <property type="term" value="F:manganese ion binding"/>
    <property type="evidence" value="ECO:0007669"/>
    <property type="project" value="UniProtKB-UniRule"/>
</dbReference>
<dbReference type="GO" id="GO:0008758">
    <property type="term" value="F:UDP-2,3-diacylglucosamine hydrolase activity"/>
    <property type="evidence" value="ECO:0007669"/>
    <property type="project" value="UniProtKB-UniRule"/>
</dbReference>
<dbReference type="GO" id="GO:0009245">
    <property type="term" value="P:lipid A biosynthetic process"/>
    <property type="evidence" value="ECO:0007669"/>
    <property type="project" value="UniProtKB-UniRule"/>
</dbReference>
<dbReference type="CDD" id="cd07398">
    <property type="entry name" value="MPP_YbbF-LpxH"/>
    <property type="match status" value="1"/>
</dbReference>
<dbReference type="Gene3D" id="3.60.21.10">
    <property type="match status" value="1"/>
</dbReference>
<dbReference type="HAMAP" id="MF_00575">
    <property type="entry name" value="LpxH"/>
    <property type="match status" value="1"/>
</dbReference>
<dbReference type="InterPro" id="IPR004843">
    <property type="entry name" value="Calcineurin-like_PHP_ApaH"/>
</dbReference>
<dbReference type="InterPro" id="IPR043461">
    <property type="entry name" value="LpxH-like"/>
</dbReference>
<dbReference type="InterPro" id="IPR029052">
    <property type="entry name" value="Metallo-depent_PP-like"/>
</dbReference>
<dbReference type="InterPro" id="IPR010138">
    <property type="entry name" value="UDP-diacylglucosamine_Hdrlase"/>
</dbReference>
<dbReference type="NCBIfam" id="TIGR01854">
    <property type="entry name" value="lipid_A_lpxH"/>
    <property type="match status" value="1"/>
</dbReference>
<dbReference type="NCBIfam" id="NF003743">
    <property type="entry name" value="PRK05340.1"/>
    <property type="match status" value="1"/>
</dbReference>
<dbReference type="PANTHER" id="PTHR34990:SF1">
    <property type="entry name" value="UDP-2,3-DIACYLGLUCOSAMINE HYDROLASE"/>
    <property type="match status" value="1"/>
</dbReference>
<dbReference type="PANTHER" id="PTHR34990">
    <property type="entry name" value="UDP-2,3-DIACYLGLUCOSAMINE HYDROLASE-RELATED"/>
    <property type="match status" value="1"/>
</dbReference>
<dbReference type="Pfam" id="PF00149">
    <property type="entry name" value="Metallophos"/>
    <property type="match status" value="1"/>
</dbReference>
<dbReference type="SUPFAM" id="SSF56300">
    <property type="entry name" value="Metallo-dependent phosphatases"/>
    <property type="match status" value="1"/>
</dbReference>
<gene>
    <name evidence="1" type="primary">lpxH</name>
    <name type="ordered locus">VV1360</name>
</gene>
<organism>
    <name type="scientific">Vibrio vulnificus (strain YJ016)</name>
    <dbReference type="NCBI Taxonomy" id="196600"/>
    <lineage>
        <taxon>Bacteria</taxon>
        <taxon>Pseudomonadati</taxon>
        <taxon>Pseudomonadota</taxon>
        <taxon>Gammaproteobacteria</taxon>
        <taxon>Vibrionales</taxon>
        <taxon>Vibrionaceae</taxon>
        <taxon>Vibrio</taxon>
    </lineage>
</organism>
<evidence type="ECO:0000255" key="1">
    <source>
        <dbReference type="HAMAP-Rule" id="MF_00575"/>
    </source>
</evidence>
<keyword id="KW-0997">Cell inner membrane</keyword>
<keyword id="KW-1003">Cell membrane</keyword>
<keyword id="KW-0378">Hydrolase</keyword>
<keyword id="KW-0441">Lipid A biosynthesis</keyword>
<keyword id="KW-0444">Lipid biosynthesis</keyword>
<keyword id="KW-0443">Lipid metabolism</keyword>
<keyword id="KW-0464">Manganese</keyword>
<keyword id="KW-0472">Membrane</keyword>
<keyword id="KW-0479">Metal-binding</keyword>
<proteinExistence type="inferred from homology"/>
<reference key="1">
    <citation type="journal article" date="2003" name="Genome Res.">
        <title>Comparative genome analysis of Vibrio vulnificus, a marine pathogen.</title>
        <authorList>
            <person name="Chen C.-Y."/>
            <person name="Wu K.-M."/>
            <person name="Chang Y.-C."/>
            <person name="Chang C.-H."/>
            <person name="Tsai H.-C."/>
            <person name="Liao T.-L."/>
            <person name="Liu Y.-M."/>
            <person name="Chen H.-J."/>
            <person name="Shen A.B.-T."/>
            <person name="Li J.-C."/>
            <person name="Su T.-L."/>
            <person name="Shao C.-P."/>
            <person name="Lee C.-T."/>
            <person name="Hor L.-I."/>
            <person name="Tsai S.-F."/>
        </authorList>
    </citation>
    <scope>NUCLEOTIDE SEQUENCE [LARGE SCALE GENOMIC DNA]</scope>
    <source>
        <strain>YJ016</strain>
    </source>
</reference>
<comment type="function">
    <text evidence="1">Hydrolyzes the pyrophosphate bond of UDP-2,3-diacylglucosamine to yield 2,3-diacylglucosamine 1-phosphate (lipid X) and UMP by catalyzing the attack of water at the alpha-P atom. Involved in the biosynthesis of lipid A, a phosphorylated glycolipid that anchors the lipopolysaccharide to the outer membrane of the cell.</text>
</comment>
<comment type="catalytic activity">
    <reaction evidence="1">
        <text>UDP-2-N,3-O-bis[(3R)-3-hydroxytetradecanoyl]-alpha-D-glucosamine + H2O = 2-N,3-O-bis[(3R)-3-hydroxytetradecanoyl]-alpha-D-glucosaminyl 1-phosphate + UMP + 2 H(+)</text>
        <dbReference type="Rhea" id="RHEA:25213"/>
        <dbReference type="ChEBI" id="CHEBI:15377"/>
        <dbReference type="ChEBI" id="CHEBI:15378"/>
        <dbReference type="ChEBI" id="CHEBI:57865"/>
        <dbReference type="ChEBI" id="CHEBI:57957"/>
        <dbReference type="ChEBI" id="CHEBI:78847"/>
        <dbReference type="EC" id="3.6.1.54"/>
    </reaction>
</comment>
<comment type="cofactor">
    <cofactor evidence="1">
        <name>Mn(2+)</name>
        <dbReference type="ChEBI" id="CHEBI:29035"/>
    </cofactor>
    <text evidence="1">Binds 2 Mn(2+) ions per subunit in a binuclear metal center.</text>
</comment>
<comment type="pathway">
    <text evidence="1">Glycolipid biosynthesis; lipid IV(A) biosynthesis; lipid IV(A) from (3R)-3-hydroxytetradecanoyl-[acyl-carrier-protein] and UDP-N-acetyl-alpha-D-glucosamine: step 4/6.</text>
</comment>
<comment type="subcellular location">
    <subcellularLocation>
        <location evidence="1">Cell inner membrane</location>
        <topology evidence="1">Peripheral membrane protein</topology>
        <orientation evidence="1">Cytoplasmic side</orientation>
    </subcellularLocation>
</comment>
<comment type="similarity">
    <text evidence="1">Belongs to the LpxH family.</text>
</comment>
<name>LPXH_VIBVY</name>